<gene>
    <name evidence="1 5" type="primary">thrS</name>
    <name type="ordered locus">MJ1197</name>
</gene>
<organism>
    <name type="scientific">Methanocaldococcus jannaschii (strain ATCC 43067 / DSM 2661 / JAL-1 / JCM 10045 / NBRC 100440)</name>
    <name type="common">Methanococcus jannaschii</name>
    <dbReference type="NCBI Taxonomy" id="243232"/>
    <lineage>
        <taxon>Archaea</taxon>
        <taxon>Methanobacteriati</taxon>
        <taxon>Methanobacteriota</taxon>
        <taxon>Methanomada group</taxon>
        <taxon>Methanococci</taxon>
        <taxon>Methanococcales</taxon>
        <taxon>Methanocaldococcaceae</taxon>
        <taxon>Methanocaldococcus</taxon>
    </lineage>
</organism>
<proteinExistence type="evidence at protein level"/>
<sequence length="620" mass="72357">MKMLLIHSDYLEFEAKEKTKIAEETENLKGKLDECLACFIAVEREDENNPEGTAIGAVEEIEKVANQLKVNNIVVYPYAHLSSDLSSPETAVKVLKDIESILKERGYNVLRAPFGWYKAFKISCKGHPLSELSRKIVAKEEKKEEGEESKFYLLNPETEEIIELNENNINIIKDEELLALAKHELGIREHKEHDEPPHVKFIKEKDICSYEEASDPGHFRWYPKGKLMRDLLADYVYNLVVNMGAMPVETPIMYDLGNPAIREHADKFGERQYRFRQGNKELMLRFAACFGQFMMKKDMYLLPRYLPLKLYELSTYSFRYEQRGELVGLKRLRCFTMPDMHTVCLNLEQAMEEFEKQFWECLKTGDDLNLSYSVIFRFTKDFFDEHRDWFFKIAKEYKNKYGKDVILEILPKRKHYWVGKVDIAVIDSLGRPIENPTVQIDVESAKRFDIKVHTNEGEIYPIILHCSPTGSIERVLCGLLEKAAIEAEKGNAPMLPVWLSPIQVRVIPVAERHYDYALKVAEKLRENNIRADFDDREESVSKKIRNAGKEWVPYVVVIGDEEMESDKLTVTIREKSTLKKPYKEKMTLDELIERIKKETANYPYRPLPLPIRCSLQPKFH</sequence>
<accession>Q58597</accession>
<comment type="function">
    <text evidence="2 4">Catalyzes the attachment of threonine to tRNA(Thr) in a two-step reaction: L-threonine is first activated by ATP to form Thr-AMP and then transferred to the acceptor end of tRNA(Thr) (PubMed:15240874). Also activates L-serine, but does not detectably transfer it to tRNA(Thr) (PubMed:15240874). Edits incorrectly charged L-seryl-tRNA(Thr) via its editing domain (PubMed:15240874). Has no activity on correctly acylated L-seryl-tRNA(Ser) or L-threonyl-tRNA(Thr) (PubMed:15240874). Deacylates correctly charged glycyl-tRNA(Gly), but not glycyl-tRNA(Gly)(2'-dA76) (the terminal 2'-OH of tRNA adenine 76 has been dehydroxylated) nor the 2'-fluoro tRNA derivative, strongly suggesting the editing function is tRNA catalyzed (PubMed:26113036).</text>
</comment>
<comment type="catalytic activity">
    <reaction evidence="1">
        <text>tRNA(Thr) + L-threonine + ATP = L-threonyl-tRNA(Thr) + AMP + diphosphate + H(+)</text>
        <dbReference type="Rhea" id="RHEA:24624"/>
        <dbReference type="Rhea" id="RHEA-COMP:9670"/>
        <dbReference type="Rhea" id="RHEA-COMP:9704"/>
        <dbReference type="ChEBI" id="CHEBI:15378"/>
        <dbReference type="ChEBI" id="CHEBI:30616"/>
        <dbReference type="ChEBI" id="CHEBI:33019"/>
        <dbReference type="ChEBI" id="CHEBI:57926"/>
        <dbReference type="ChEBI" id="CHEBI:78442"/>
        <dbReference type="ChEBI" id="CHEBI:78534"/>
        <dbReference type="ChEBI" id="CHEBI:456215"/>
        <dbReference type="EC" id="6.1.1.3"/>
    </reaction>
</comment>
<comment type="cofactor">
    <cofactor evidence="1">
        <name>Zn(2+)</name>
        <dbReference type="ChEBI" id="CHEBI:29105"/>
    </cofactor>
    <text evidence="1">Binds 1 zinc ion per subunit.</text>
</comment>
<comment type="activity regulation">
    <text evidence="3">Not inhibited by 1 uM borrelidin (BN); probably does not bind BN.</text>
</comment>
<comment type="biophysicochemical properties">
    <kinetics>
        <KM evidence="2">25 mM for L-serine activation</KM>
        <KM evidence="2 3">100 mM for L-threonine activation</KM>
        <text evidence="2 3">kcat is 12.3 sec(-1) for L-serine, 13.5 for L-threonine at 60 degrees Celsius (PubMed:15240874). kcat is 1.2 sec(-1) (PubMed:15507440).</text>
    </kinetics>
</comment>
<comment type="subunit">
    <text evidence="1">Homodimer.</text>
</comment>
<comment type="subcellular location">
    <subcellularLocation>
        <location evidence="1">Cytoplasm</location>
    </subcellularLocation>
</comment>
<comment type="domain">
    <text evidence="2 4">The N-terminal domain (about residues 1-140) is an archaea-specific tRNA-editing domain (PubMed:15240874, PubMed:26113036) that has a highly similar structure to Dtd (D-aminoacyl-tRNA deacylase). Editing of incorrectly charged L-seryl-tRNA(Thr) by this domain is tRNA catalyzed (PubMed:26113036).</text>
</comment>
<comment type="similarity">
    <text evidence="1">Belongs to the class-II aminoacyl-tRNA synthetase family.</text>
</comment>
<comment type="sequence caution" evidence="6">
    <conflict type="erroneous initiation">
        <sequence resource="EMBL-CDS" id="AAB99201"/>
    </conflict>
    <text>Extended N-terminus.</text>
</comment>
<name>SYT_METJA</name>
<evidence type="ECO:0000255" key="1">
    <source>
        <dbReference type="HAMAP-Rule" id="MF_00184"/>
    </source>
</evidence>
<evidence type="ECO:0000269" key="2">
    <source>
    </source>
</evidence>
<evidence type="ECO:0000269" key="3">
    <source>
    </source>
</evidence>
<evidence type="ECO:0000269" key="4">
    <source>
    </source>
</evidence>
<evidence type="ECO:0000303" key="5">
    <source>
    </source>
</evidence>
<evidence type="ECO:0000305" key="6"/>
<evidence type="ECO:0000305" key="7">
    <source>
    </source>
</evidence>
<evidence type="ECO:0007744" key="8">
    <source>
        <dbReference type="PDB" id="4RRF"/>
    </source>
</evidence>
<evidence type="ECO:0007744" key="9">
    <source>
        <dbReference type="PDB" id="4RRG"/>
    </source>
</evidence>
<evidence type="ECO:0007829" key="10">
    <source>
        <dbReference type="PDB" id="4RRF"/>
    </source>
</evidence>
<feature type="chain" id="PRO_0000101101" description="Threonine--tRNA ligase">
    <location>
        <begin position="1"/>
        <end position="620"/>
    </location>
</feature>
<feature type="region of interest" description="Editing domain" evidence="1 7">
    <location>
        <begin position="1"/>
        <end position="141"/>
    </location>
</feature>
<feature type="region of interest" description="Catalytic" evidence="1">
    <location>
        <begin position="197"/>
        <end position="496"/>
    </location>
</feature>
<feature type="binding site" evidence="1">
    <location>
        <position position="289"/>
    </location>
    <ligand>
        <name>Zn(2+)</name>
        <dbReference type="ChEBI" id="CHEBI:29105"/>
    </ligand>
</feature>
<feature type="binding site" evidence="1">
    <location>
        <position position="341"/>
    </location>
    <ligand>
        <name>Zn(2+)</name>
        <dbReference type="ChEBI" id="CHEBI:29105"/>
    </ligand>
</feature>
<feature type="binding site" evidence="1">
    <location>
        <position position="465"/>
    </location>
    <ligand>
        <name>Zn(2+)</name>
        <dbReference type="ChEBI" id="CHEBI:29105"/>
    </ligand>
</feature>
<feature type="mutagenesis site" description="Still charges Thr, no longer edits mischarged L-seryl-tRNA(Thr)." evidence="2">
    <original>H</original>
    <variation>A</variation>
    <location>
        <position position="7"/>
    </location>
</feature>
<feature type="mutagenesis site" description="Still charges Thr, 5% editing of mischarged L-seryl-tRNA(Thr)." evidence="2">
    <original>F</original>
    <variation>A</variation>
    <location>
        <position position="13"/>
    </location>
</feature>
<feature type="mutagenesis site" description="Wild-type for Thr charging and L-seryl-tRNA(Thr) editing." evidence="2">
    <original>D</original>
    <variation>A</variation>
    <location>
        <position position="46"/>
    </location>
</feature>
<feature type="mutagenesis site" description="Still charges Thr, no longer edits mishcarged L-seryl-tRNA(Thr), high mischarging activity." evidence="2">
    <original>H</original>
    <variation>A</variation>
    <location>
        <position position="80"/>
    </location>
</feature>
<feature type="mutagenesis site" description="Isolated domain has nearly wild-type deacylation of mischarged L-seryl-tRNA(Thr), no activity on L-threonyl-tRNA(Thr). Intermediate deacylation of L-seryl-tRNA(Thr); when associated with A-131." evidence="4">
    <original>Y</original>
    <variation>A</variation>
    <location>
        <position position="117"/>
    </location>
</feature>
<feature type="mutagenesis site" description="Still charges Thr, no longer edits mischarged L-seryl-tRNA(Thr)." evidence="2">
    <original>K</original>
    <variation>A</variation>
    <location>
        <position position="118"/>
    </location>
</feature>
<feature type="mutagenesis site" description="Isolated domain does not deacylate mischarged L-seryl-tRNA(Thr), no activity on L-threonyl-tRNA(Thr)." evidence="4">
    <original>K</original>
    <variation>M</variation>
    <location>
        <position position="118"/>
    </location>
</feature>
<feature type="mutagenesis site" description="Still charges Thr, 80% editing of mischarged L-seryl-tRNA(Thr), no mischarging activity." evidence="2">
    <original>C</original>
    <variation>A</variation>
    <location>
        <position position="124"/>
    </location>
</feature>
<feature type="mutagenesis site" description="Still charges Thr, no longer edits mischarged L-seryl-tRNA(Thr), high mischarging activity." evidence="2">
    <original>H</original>
    <variation>A</variation>
    <location>
        <position position="127"/>
    </location>
</feature>
<feature type="mutagenesis site" description="Isolated domain has almost no deacylation of mischarged L-seryl-tRNA(Thr), no activity on L-threonyl-tRNA(Thr). Intermediate deacylation of L-seryl-tRNA(Thr); when associated with A-117." evidence="4">
    <original>E</original>
    <variation>A</variation>
    <location>
        <position position="131"/>
    </location>
</feature>
<feature type="mutagenesis site" description="Still charges Thr, 20% editing of mischarged L-seryl-tRNA(Thr)." evidence="2">
    <original>R</original>
    <variation>A</variation>
    <location>
        <position position="134"/>
    </location>
</feature>
<feature type="strand" evidence="10">
    <location>
        <begin position="2"/>
        <end position="18"/>
    </location>
</feature>
<feature type="strand" evidence="10">
    <location>
        <begin position="28"/>
        <end position="41"/>
    </location>
</feature>
<feature type="helix" evidence="10">
    <location>
        <begin position="44"/>
        <end position="48"/>
    </location>
</feature>
<feature type="helix" evidence="10">
    <location>
        <begin position="50"/>
        <end position="68"/>
    </location>
</feature>
<feature type="strand" evidence="10">
    <location>
        <begin position="72"/>
        <end position="77"/>
    </location>
</feature>
<feature type="helix" evidence="10">
    <location>
        <begin position="79"/>
        <end position="81"/>
    </location>
</feature>
<feature type="strand" evidence="10">
    <location>
        <begin position="83"/>
        <end position="85"/>
    </location>
</feature>
<feature type="helix" evidence="10">
    <location>
        <begin position="88"/>
        <end position="104"/>
    </location>
</feature>
<feature type="strand" evidence="10">
    <location>
        <begin position="108"/>
        <end position="111"/>
    </location>
</feature>
<feature type="strand" evidence="10">
    <location>
        <begin position="116"/>
        <end position="124"/>
    </location>
</feature>
<feature type="strand" evidence="10">
    <location>
        <begin position="130"/>
        <end position="135"/>
    </location>
</feature>
<keyword id="KW-0002">3D-structure</keyword>
<keyword id="KW-0030">Aminoacyl-tRNA synthetase</keyword>
<keyword id="KW-0067">ATP-binding</keyword>
<keyword id="KW-0963">Cytoplasm</keyword>
<keyword id="KW-0436">Ligase</keyword>
<keyword id="KW-0479">Metal-binding</keyword>
<keyword id="KW-0547">Nucleotide-binding</keyword>
<keyword id="KW-0648">Protein biosynthesis</keyword>
<keyword id="KW-1185">Reference proteome</keyword>
<keyword id="KW-0694">RNA-binding</keyword>
<keyword id="KW-0820">tRNA-binding</keyword>
<keyword id="KW-0862">Zinc</keyword>
<dbReference type="EC" id="6.1.1.3" evidence="1"/>
<dbReference type="EMBL" id="L77117">
    <property type="protein sequence ID" value="AAB99201.1"/>
    <property type="status" value="ALT_INIT"/>
    <property type="molecule type" value="Genomic_DNA"/>
</dbReference>
<dbReference type="PIR" id="D64449">
    <property type="entry name" value="D64449"/>
</dbReference>
<dbReference type="RefSeq" id="WP_064496752.1">
    <property type="nucleotide sequence ID" value="NC_000909.1"/>
</dbReference>
<dbReference type="PDB" id="4RRF">
    <property type="method" value="X-ray"/>
    <property type="resolution" value="1.70 A"/>
    <property type="chains" value="A/B/C/D/E/F=1-141"/>
</dbReference>
<dbReference type="PDB" id="4RRG">
    <property type="method" value="X-ray"/>
    <property type="resolution" value="1.93 A"/>
    <property type="chains" value="A/B/C/D=1-141"/>
</dbReference>
<dbReference type="PDBsum" id="4RRF"/>
<dbReference type="PDBsum" id="4RRG"/>
<dbReference type="SMR" id="Q58597"/>
<dbReference type="FunCoup" id="Q58597">
    <property type="interactions" value="170"/>
</dbReference>
<dbReference type="STRING" id="243232.MJ_1197"/>
<dbReference type="PaxDb" id="243232-MJ_1197"/>
<dbReference type="DNASU" id="1452092"/>
<dbReference type="EnsemblBacteria" id="AAB99201">
    <property type="protein sequence ID" value="AAB99201"/>
    <property type="gene ID" value="MJ_1197"/>
</dbReference>
<dbReference type="GeneID" id="1452092"/>
<dbReference type="KEGG" id="mja:MJ_1197"/>
<dbReference type="eggNOG" id="arCOG00401">
    <property type="taxonomic scope" value="Archaea"/>
</dbReference>
<dbReference type="HOGENOM" id="CLU_029833_0_0_2"/>
<dbReference type="InParanoid" id="Q58597"/>
<dbReference type="OrthoDB" id="372136at2157"/>
<dbReference type="PhylomeDB" id="Q58597"/>
<dbReference type="BRENDA" id="6.1.1.3">
    <property type="organism ID" value="3260"/>
</dbReference>
<dbReference type="EvolutionaryTrace" id="Q58597"/>
<dbReference type="Proteomes" id="UP000000805">
    <property type="component" value="Chromosome"/>
</dbReference>
<dbReference type="GO" id="GO:0005737">
    <property type="term" value="C:cytoplasm"/>
    <property type="evidence" value="ECO:0007669"/>
    <property type="project" value="UniProtKB-SubCell"/>
</dbReference>
<dbReference type="GO" id="GO:0002161">
    <property type="term" value="F:aminoacyl-tRNA deacylase activity"/>
    <property type="evidence" value="ECO:0000314"/>
    <property type="project" value="UniProtKB"/>
</dbReference>
<dbReference type="GO" id="GO:0005524">
    <property type="term" value="F:ATP binding"/>
    <property type="evidence" value="ECO:0007669"/>
    <property type="project" value="UniProtKB-UniRule"/>
</dbReference>
<dbReference type="GO" id="GO:0004829">
    <property type="term" value="F:threonine-tRNA ligase activity"/>
    <property type="evidence" value="ECO:0000314"/>
    <property type="project" value="UniProtKB"/>
</dbReference>
<dbReference type="GO" id="GO:0000049">
    <property type="term" value="F:tRNA binding"/>
    <property type="evidence" value="ECO:0007669"/>
    <property type="project" value="UniProtKB-KW"/>
</dbReference>
<dbReference type="GO" id="GO:0008270">
    <property type="term" value="F:zinc ion binding"/>
    <property type="evidence" value="ECO:0007669"/>
    <property type="project" value="InterPro"/>
</dbReference>
<dbReference type="GO" id="GO:0006435">
    <property type="term" value="P:threonyl-tRNA aminoacylation"/>
    <property type="evidence" value="ECO:0000314"/>
    <property type="project" value="UniProtKB"/>
</dbReference>
<dbReference type="CDD" id="cd00860">
    <property type="entry name" value="ThrRS_anticodon"/>
    <property type="match status" value="1"/>
</dbReference>
<dbReference type="CDD" id="cd00771">
    <property type="entry name" value="ThrRS_core"/>
    <property type="match status" value="1"/>
</dbReference>
<dbReference type="FunFam" id="3.30.930.10:FF:000076">
    <property type="entry name" value="Threonine--tRNA ligase"/>
    <property type="match status" value="1"/>
</dbReference>
<dbReference type="FunFam" id="3.40.50.800:FF:000001">
    <property type="entry name" value="Threonine--tRNA ligase"/>
    <property type="match status" value="1"/>
</dbReference>
<dbReference type="FunFam" id="3.50.80.10:FF:000004">
    <property type="entry name" value="Threonine--tRNA ligase"/>
    <property type="match status" value="1"/>
</dbReference>
<dbReference type="Gene3D" id="3.40.50.800">
    <property type="entry name" value="Anticodon-binding domain"/>
    <property type="match status" value="1"/>
</dbReference>
<dbReference type="Gene3D" id="3.30.930.10">
    <property type="entry name" value="Bira Bifunctional Protein, Domain 2"/>
    <property type="match status" value="1"/>
</dbReference>
<dbReference type="Gene3D" id="3.50.80.10">
    <property type="entry name" value="D-tyrosyl-tRNA(Tyr) deacylase"/>
    <property type="match status" value="1"/>
</dbReference>
<dbReference type="HAMAP" id="MF_00184">
    <property type="entry name" value="Thr_tRNA_synth"/>
    <property type="match status" value="1"/>
</dbReference>
<dbReference type="InterPro" id="IPR002314">
    <property type="entry name" value="aa-tRNA-synt_IIb"/>
</dbReference>
<dbReference type="InterPro" id="IPR006195">
    <property type="entry name" value="aa-tRNA-synth_II"/>
</dbReference>
<dbReference type="InterPro" id="IPR045864">
    <property type="entry name" value="aa-tRNA-synth_II/BPL/LPL"/>
</dbReference>
<dbReference type="InterPro" id="IPR004154">
    <property type="entry name" value="Anticodon-bd"/>
</dbReference>
<dbReference type="InterPro" id="IPR036621">
    <property type="entry name" value="Anticodon-bd_dom_sf"/>
</dbReference>
<dbReference type="InterPro" id="IPR023509">
    <property type="entry name" value="DTD-like_sf"/>
</dbReference>
<dbReference type="InterPro" id="IPR002320">
    <property type="entry name" value="Thr-tRNA-ligase_IIa"/>
</dbReference>
<dbReference type="InterPro" id="IPR015011">
    <property type="entry name" value="Threonyl-tRNA_syn_edit_dom_arc"/>
</dbReference>
<dbReference type="InterPro" id="IPR047246">
    <property type="entry name" value="ThrRS_anticodon"/>
</dbReference>
<dbReference type="InterPro" id="IPR033728">
    <property type="entry name" value="ThrRS_core"/>
</dbReference>
<dbReference type="NCBIfam" id="NF003068">
    <property type="entry name" value="PRK03991.1"/>
    <property type="match status" value="1"/>
</dbReference>
<dbReference type="NCBIfam" id="TIGR00418">
    <property type="entry name" value="thrS"/>
    <property type="match status" value="1"/>
</dbReference>
<dbReference type="PANTHER" id="PTHR11451:SF44">
    <property type="entry name" value="THREONINE--TRNA LIGASE, CHLOROPLASTIC_MITOCHONDRIAL 2"/>
    <property type="match status" value="1"/>
</dbReference>
<dbReference type="PANTHER" id="PTHR11451">
    <property type="entry name" value="THREONINE-TRNA LIGASE"/>
    <property type="match status" value="1"/>
</dbReference>
<dbReference type="Pfam" id="PF03129">
    <property type="entry name" value="HGTP_anticodon"/>
    <property type="match status" value="1"/>
</dbReference>
<dbReference type="Pfam" id="PF00587">
    <property type="entry name" value="tRNA-synt_2b"/>
    <property type="match status" value="1"/>
</dbReference>
<dbReference type="Pfam" id="PF08915">
    <property type="entry name" value="tRNA-Thr_ED"/>
    <property type="match status" value="1"/>
</dbReference>
<dbReference type="PRINTS" id="PR01047">
    <property type="entry name" value="TRNASYNTHTHR"/>
</dbReference>
<dbReference type="SUPFAM" id="SSF52954">
    <property type="entry name" value="Class II aaRS ABD-related"/>
    <property type="match status" value="1"/>
</dbReference>
<dbReference type="SUPFAM" id="SSF55681">
    <property type="entry name" value="Class II aaRS and biotin synthetases"/>
    <property type="match status" value="1"/>
</dbReference>
<dbReference type="PROSITE" id="PS50862">
    <property type="entry name" value="AA_TRNA_LIGASE_II"/>
    <property type="match status" value="1"/>
</dbReference>
<reference key="1">
    <citation type="journal article" date="1996" name="Science">
        <title>Complete genome sequence of the methanogenic archaeon, Methanococcus jannaschii.</title>
        <authorList>
            <person name="Bult C.J."/>
            <person name="White O."/>
            <person name="Olsen G.J."/>
            <person name="Zhou L."/>
            <person name="Fleischmann R.D."/>
            <person name="Sutton G.G."/>
            <person name="Blake J.A."/>
            <person name="FitzGerald L.M."/>
            <person name="Clayton R.A."/>
            <person name="Gocayne J.D."/>
            <person name="Kerlavage A.R."/>
            <person name="Dougherty B.A."/>
            <person name="Tomb J.-F."/>
            <person name="Adams M.D."/>
            <person name="Reich C.I."/>
            <person name="Overbeek R."/>
            <person name="Kirkness E.F."/>
            <person name="Weinstock K.G."/>
            <person name="Merrick J.M."/>
            <person name="Glodek A."/>
            <person name="Scott J.L."/>
            <person name="Geoghagen N.S.M."/>
            <person name="Weidman J.F."/>
            <person name="Fuhrmann J.L."/>
            <person name="Nguyen D."/>
            <person name="Utterback T.R."/>
            <person name="Kelley J.M."/>
            <person name="Peterson J.D."/>
            <person name="Sadow P.W."/>
            <person name="Hanna M.C."/>
            <person name="Cotton M.D."/>
            <person name="Roberts K.M."/>
            <person name="Hurst M.A."/>
            <person name="Kaine B.P."/>
            <person name="Borodovsky M."/>
            <person name="Klenk H.-P."/>
            <person name="Fraser C.M."/>
            <person name="Smith H.O."/>
            <person name="Woese C.R."/>
            <person name="Venter J.C."/>
        </authorList>
    </citation>
    <scope>NUCLEOTIDE SEQUENCE [LARGE SCALE GENOMIC DNA]</scope>
    <source>
        <strain>ATCC 43067 / DSM 2661 / JAL-1 / JCM 10045 / NBRC 100440</strain>
    </source>
</reference>
<reference key="2">
    <citation type="journal article" date="2004" name="Proc. Natl. Acad. Sci. U.S.A.">
        <title>A freestanding proofreading domain is required for protein synthesis quality control in Archaea.</title>
        <authorList>
            <person name="Korencic D."/>
            <person name="Ahel I."/>
            <person name="Schelert J."/>
            <person name="Sacher M."/>
            <person name="Ruan B."/>
            <person name="Stathopoulos C."/>
            <person name="Blum P."/>
            <person name="Ibba M."/>
            <person name="Soell D."/>
        </authorList>
    </citation>
    <scope>FUNCTION</scope>
    <scope>BIOPHYSICOCHEMICAL PROPERTIES</scope>
    <scope>MUTAGENESIS OF HIS-7; PHE-13; ASP-46; HIS-80; LYS-118; CYS-124; HIS-127 AND ARG-134</scope>
</reference>
<reference key="3">
    <citation type="journal article" date="2005" name="J. Biol. Chem.">
        <title>A unique hydrophobic cluster near the active site contributes to differences in borrelidin inhibition among threonyl-tRNA synthetases.</title>
        <authorList>
            <person name="Ruan B."/>
            <person name="Bovee M.L."/>
            <person name="Sacher M."/>
            <person name="Stathopoulos C."/>
            <person name="Poralla K."/>
            <person name="Francklyn C.S."/>
            <person name="Soell D."/>
        </authorList>
    </citation>
    <scope>FUNCTION</scope>
    <scope>ACTIVITY REGULATION</scope>
    <scope>BIOPHYSICOCHEMICAL PROPERTIES</scope>
</reference>
<reference evidence="8 9" key="4">
    <citation type="journal article" date="2015" name="Nat. Commun.">
        <title>Specificity and catalysis hardwired at the RNA-protein interface in a translational proofreading enzyme.</title>
        <authorList>
            <person name="Ahmad S."/>
            <person name="Muthukumar S."/>
            <person name="Kuncha S.K."/>
            <person name="Routh S.B."/>
            <person name="Yerabham A.S."/>
            <person name="Hussain T."/>
            <person name="Kamarthapu V."/>
            <person name="Kruparani S.P."/>
            <person name="Sankaranarayanan R."/>
        </authorList>
    </citation>
    <scope>X-RAY CRYSTALLOGRAPHY (1.70 ANGSTROMS) OF 1-141 (EDITING DOMAIN) IN COMPLEX WITH POST-TRANSFER EDITING SUBSTRATE ANALOGS</scope>
    <scope>FUNCTION</scope>
    <scope>EDITING REACTION MECHANISM</scope>
    <scope>MUTAGENESIS OF TYR-117; LYS-118 AND GLU-131</scope>
</reference>
<protein>
    <recommendedName>
        <fullName evidence="1">Threonine--tRNA ligase</fullName>
        <ecNumber evidence="1">6.1.1.3</ecNumber>
    </recommendedName>
    <alternativeName>
        <fullName evidence="1 5">Threonyl-tRNA synthetase</fullName>
        <shortName evidence="1">ThrRS</shortName>
    </alternativeName>
</protein>